<organism>
    <name type="scientific">Shewanella baltica (strain OS223)</name>
    <dbReference type="NCBI Taxonomy" id="407976"/>
    <lineage>
        <taxon>Bacteria</taxon>
        <taxon>Pseudomonadati</taxon>
        <taxon>Pseudomonadota</taxon>
        <taxon>Gammaproteobacteria</taxon>
        <taxon>Alteromonadales</taxon>
        <taxon>Shewanellaceae</taxon>
        <taxon>Shewanella</taxon>
    </lineage>
</organism>
<evidence type="ECO:0000255" key="1">
    <source>
        <dbReference type="HAMAP-Rule" id="MF_00051"/>
    </source>
</evidence>
<protein>
    <recommendedName>
        <fullName evidence="1">Serine hydroxymethyltransferase</fullName>
        <shortName evidence="1">SHMT</shortName>
        <shortName evidence="1">Serine methylase</shortName>
        <ecNumber evidence="1">2.1.2.1</ecNumber>
    </recommendedName>
</protein>
<comment type="function">
    <text evidence="1">Catalyzes the reversible interconversion of serine and glycine with tetrahydrofolate (THF) serving as the one-carbon carrier. This reaction serves as the major source of one-carbon groups required for the biosynthesis of purines, thymidylate, methionine, and other important biomolecules. Also exhibits THF-independent aldolase activity toward beta-hydroxyamino acids, producing glycine and aldehydes, via a retro-aldol mechanism.</text>
</comment>
<comment type="catalytic activity">
    <reaction evidence="1">
        <text>(6R)-5,10-methylene-5,6,7,8-tetrahydrofolate + glycine + H2O = (6S)-5,6,7,8-tetrahydrofolate + L-serine</text>
        <dbReference type="Rhea" id="RHEA:15481"/>
        <dbReference type="ChEBI" id="CHEBI:15377"/>
        <dbReference type="ChEBI" id="CHEBI:15636"/>
        <dbReference type="ChEBI" id="CHEBI:33384"/>
        <dbReference type="ChEBI" id="CHEBI:57305"/>
        <dbReference type="ChEBI" id="CHEBI:57453"/>
        <dbReference type="EC" id="2.1.2.1"/>
    </reaction>
</comment>
<comment type="cofactor">
    <cofactor evidence="1">
        <name>pyridoxal 5'-phosphate</name>
        <dbReference type="ChEBI" id="CHEBI:597326"/>
    </cofactor>
</comment>
<comment type="pathway">
    <text evidence="1">One-carbon metabolism; tetrahydrofolate interconversion.</text>
</comment>
<comment type="pathway">
    <text evidence="1">Amino-acid biosynthesis; glycine biosynthesis; glycine from L-serine: step 1/1.</text>
</comment>
<comment type="subunit">
    <text evidence="1">Homodimer.</text>
</comment>
<comment type="subcellular location">
    <subcellularLocation>
        <location evidence="1">Cytoplasm</location>
    </subcellularLocation>
</comment>
<comment type="similarity">
    <text evidence="1">Belongs to the SHMT family.</text>
</comment>
<proteinExistence type="inferred from homology"/>
<feature type="chain" id="PRO_1000117647" description="Serine hydroxymethyltransferase">
    <location>
        <begin position="1"/>
        <end position="417"/>
    </location>
</feature>
<feature type="binding site" evidence="1">
    <location>
        <position position="121"/>
    </location>
    <ligand>
        <name>(6S)-5,6,7,8-tetrahydrofolate</name>
        <dbReference type="ChEBI" id="CHEBI:57453"/>
    </ligand>
</feature>
<feature type="binding site" evidence="1">
    <location>
        <begin position="125"/>
        <end position="127"/>
    </location>
    <ligand>
        <name>(6S)-5,6,7,8-tetrahydrofolate</name>
        <dbReference type="ChEBI" id="CHEBI:57453"/>
    </ligand>
</feature>
<feature type="binding site" evidence="1">
    <location>
        <begin position="355"/>
        <end position="357"/>
    </location>
    <ligand>
        <name>(6S)-5,6,7,8-tetrahydrofolate</name>
        <dbReference type="ChEBI" id="CHEBI:57453"/>
    </ligand>
</feature>
<feature type="site" description="Plays an important role in substrate specificity" evidence="1">
    <location>
        <position position="228"/>
    </location>
</feature>
<feature type="modified residue" description="N6-(pyridoxal phosphate)lysine" evidence="1">
    <location>
        <position position="229"/>
    </location>
</feature>
<dbReference type="EC" id="2.1.2.1" evidence="1"/>
<dbReference type="EMBL" id="CP001252">
    <property type="protein sequence ID" value="ACK45722.1"/>
    <property type="molecule type" value="Genomic_DNA"/>
</dbReference>
<dbReference type="RefSeq" id="WP_012587088.1">
    <property type="nucleotide sequence ID" value="NC_011663.1"/>
</dbReference>
<dbReference type="SMR" id="B8E6W1"/>
<dbReference type="KEGG" id="sbp:Sbal223_1209"/>
<dbReference type="HOGENOM" id="CLU_022477_2_1_6"/>
<dbReference type="UniPathway" id="UPA00193"/>
<dbReference type="UniPathway" id="UPA00288">
    <property type="reaction ID" value="UER01023"/>
</dbReference>
<dbReference type="Proteomes" id="UP000002507">
    <property type="component" value="Chromosome"/>
</dbReference>
<dbReference type="GO" id="GO:0005829">
    <property type="term" value="C:cytosol"/>
    <property type="evidence" value="ECO:0007669"/>
    <property type="project" value="TreeGrafter"/>
</dbReference>
<dbReference type="GO" id="GO:0004372">
    <property type="term" value="F:glycine hydroxymethyltransferase activity"/>
    <property type="evidence" value="ECO:0007669"/>
    <property type="project" value="UniProtKB-UniRule"/>
</dbReference>
<dbReference type="GO" id="GO:0030170">
    <property type="term" value="F:pyridoxal phosphate binding"/>
    <property type="evidence" value="ECO:0007669"/>
    <property type="project" value="UniProtKB-UniRule"/>
</dbReference>
<dbReference type="GO" id="GO:0019264">
    <property type="term" value="P:glycine biosynthetic process from serine"/>
    <property type="evidence" value="ECO:0007669"/>
    <property type="project" value="UniProtKB-UniRule"/>
</dbReference>
<dbReference type="GO" id="GO:0035999">
    <property type="term" value="P:tetrahydrofolate interconversion"/>
    <property type="evidence" value="ECO:0007669"/>
    <property type="project" value="UniProtKB-UniRule"/>
</dbReference>
<dbReference type="CDD" id="cd00378">
    <property type="entry name" value="SHMT"/>
    <property type="match status" value="1"/>
</dbReference>
<dbReference type="FunFam" id="3.40.640.10:FF:000001">
    <property type="entry name" value="Serine hydroxymethyltransferase"/>
    <property type="match status" value="1"/>
</dbReference>
<dbReference type="FunFam" id="3.90.1150.10:FF:000003">
    <property type="entry name" value="Serine hydroxymethyltransferase"/>
    <property type="match status" value="1"/>
</dbReference>
<dbReference type="Gene3D" id="3.90.1150.10">
    <property type="entry name" value="Aspartate Aminotransferase, domain 1"/>
    <property type="match status" value="1"/>
</dbReference>
<dbReference type="Gene3D" id="3.40.640.10">
    <property type="entry name" value="Type I PLP-dependent aspartate aminotransferase-like (Major domain)"/>
    <property type="match status" value="1"/>
</dbReference>
<dbReference type="HAMAP" id="MF_00051">
    <property type="entry name" value="SHMT"/>
    <property type="match status" value="1"/>
</dbReference>
<dbReference type="InterPro" id="IPR015424">
    <property type="entry name" value="PyrdxlP-dep_Trfase"/>
</dbReference>
<dbReference type="InterPro" id="IPR015421">
    <property type="entry name" value="PyrdxlP-dep_Trfase_major"/>
</dbReference>
<dbReference type="InterPro" id="IPR015422">
    <property type="entry name" value="PyrdxlP-dep_Trfase_small"/>
</dbReference>
<dbReference type="InterPro" id="IPR001085">
    <property type="entry name" value="Ser_HO-MeTrfase"/>
</dbReference>
<dbReference type="InterPro" id="IPR049943">
    <property type="entry name" value="Ser_HO-MeTrfase-like"/>
</dbReference>
<dbReference type="InterPro" id="IPR019798">
    <property type="entry name" value="Ser_HO-MeTrfase_PLP_BS"/>
</dbReference>
<dbReference type="InterPro" id="IPR039429">
    <property type="entry name" value="SHMT-like_dom"/>
</dbReference>
<dbReference type="NCBIfam" id="NF000586">
    <property type="entry name" value="PRK00011.1"/>
    <property type="match status" value="1"/>
</dbReference>
<dbReference type="PANTHER" id="PTHR11680">
    <property type="entry name" value="SERINE HYDROXYMETHYLTRANSFERASE"/>
    <property type="match status" value="1"/>
</dbReference>
<dbReference type="PANTHER" id="PTHR11680:SF50">
    <property type="entry name" value="SERINE HYDROXYMETHYLTRANSFERASE"/>
    <property type="match status" value="1"/>
</dbReference>
<dbReference type="Pfam" id="PF00464">
    <property type="entry name" value="SHMT"/>
    <property type="match status" value="1"/>
</dbReference>
<dbReference type="PIRSF" id="PIRSF000412">
    <property type="entry name" value="SHMT"/>
    <property type="match status" value="1"/>
</dbReference>
<dbReference type="SUPFAM" id="SSF53383">
    <property type="entry name" value="PLP-dependent transferases"/>
    <property type="match status" value="1"/>
</dbReference>
<dbReference type="PROSITE" id="PS00096">
    <property type="entry name" value="SHMT"/>
    <property type="match status" value="1"/>
</dbReference>
<gene>
    <name evidence="1" type="primary">glyA</name>
    <name type="ordered locus">Sbal223_1209</name>
</gene>
<keyword id="KW-0028">Amino-acid biosynthesis</keyword>
<keyword id="KW-0963">Cytoplasm</keyword>
<keyword id="KW-0554">One-carbon metabolism</keyword>
<keyword id="KW-0663">Pyridoxal phosphate</keyword>
<keyword id="KW-0808">Transferase</keyword>
<reference key="1">
    <citation type="submission" date="2008-12" db="EMBL/GenBank/DDBJ databases">
        <title>Complete sequence of chromosome of Shewanella baltica OS223.</title>
        <authorList>
            <consortium name="US DOE Joint Genome Institute"/>
            <person name="Lucas S."/>
            <person name="Copeland A."/>
            <person name="Lapidus A."/>
            <person name="Glavina del Rio T."/>
            <person name="Dalin E."/>
            <person name="Tice H."/>
            <person name="Bruce D."/>
            <person name="Goodwin L."/>
            <person name="Pitluck S."/>
            <person name="Chertkov O."/>
            <person name="Meincke L."/>
            <person name="Brettin T."/>
            <person name="Detter J.C."/>
            <person name="Han C."/>
            <person name="Kuske C.R."/>
            <person name="Larimer F."/>
            <person name="Land M."/>
            <person name="Hauser L."/>
            <person name="Kyrpides N."/>
            <person name="Ovchinnikova G."/>
            <person name="Brettar I."/>
            <person name="Rodrigues J."/>
            <person name="Konstantinidis K."/>
            <person name="Tiedje J."/>
        </authorList>
    </citation>
    <scope>NUCLEOTIDE SEQUENCE [LARGE SCALE GENOMIC DNA]</scope>
    <source>
        <strain>OS223</strain>
    </source>
</reference>
<sequence>MLKKDMNIADYDPELFNAIQNETLRQEEHIELIASENYTSPRVMEAQGSQLTNKYAEGYPGKRYYGGCEYVDVVETLAIERAKELFGATYANVQPHSGSQANSAVYMALLKPGDTVLGMNLAHGGHLTHGSPVNFSGKLYNIIPYGIDESGKIDYDEMERLAVEHKPKMMIGGFSAYSGIVDWAKMREIADKIGAYLFVDMAHVAGLIAAGVYPNPVPHAHVVTSTTHKTLAGPRGGVILSAADDEDLYKKLNSAVFPGGQGGPLMHVIAGKAVAFKEALEPEFKVYQQQVVNNAKAMVEVFLERGYKIVSGGTSNHLMLVDLIGRDLTGKEADAALGSANITVNKNSVPNDPRSPFVTSGVRIGTPAITRRGFKEAESKELTGWICDILDDASNPAVIERVKGQVLALCARFPVYG</sequence>
<accession>B8E6W1</accession>
<name>GLYA_SHEB2</name>